<keyword id="KW-0238">DNA-binding</keyword>
<keyword id="KW-0479">Metal-binding</keyword>
<keyword id="KW-0539">Nucleus</keyword>
<keyword id="KW-0804">Transcription</keyword>
<keyword id="KW-0805">Transcription regulation</keyword>
<keyword id="KW-0862">Zinc</keyword>
<comment type="function">
    <text evidence="5">Transcription factor that probably regulates the expression of the gene cluster that mediates the biosynthesis of notoamide, a fungal indole alkaloid that belongs to a family of natural products containing a characteristic bicyclo[2.2.2]diazaoctane core.</text>
</comment>
<comment type="subcellular location">
    <subcellularLocation>
        <location evidence="1">Nucleus</location>
    </subcellularLocation>
</comment>
<comment type="biotechnology">
    <text evidence="3">Notoamides have been shown to exhibit antitumoral activities (PubMed:17304611). Notoamides A-C show moderate cytotoxicity against HeLa and L1210 cells with IC(50) values in the range of 22-52 mg/ml, but the IC(50) value of notoamide D is greater than 100 mg/ml (PubMed:17304611). Moreover, notoamide C induces G2/M-cell cycle arrest at a concentration of 6.3 mg/ml (PubMed:17304611).</text>
</comment>
<organism>
    <name type="scientific">Aspergillus sp. (strain MF297-2)</name>
    <dbReference type="NCBI Taxonomy" id="877550"/>
    <lineage>
        <taxon>Eukaryota</taxon>
        <taxon>Fungi</taxon>
        <taxon>Dikarya</taxon>
        <taxon>Ascomycota</taxon>
        <taxon>Pezizomycotina</taxon>
        <taxon>Eurotiomycetes</taxon>
        <taxon>Eurotiomycetidae</taxon>
        <taxon>Eurotiales</taxon>
        <taxon>Aspergillaceae</taxon>
        <taxon>Aspergillus</taxon>
    </lineage>
</organism>
<accession>E1ACQ7</accession>
<evidence type="ECO:0000255" key="1">
    <source>
        <dbReference type="PROSITE-ProRule" id="PRU00227"/>
    </source>
</evidence>
<evidence type="ECO:0000256" key="2">
    <source>
        <dbReference type="SAM" id="MobiDB-lite"/>
    </source>
</evidence>
<evidence type="ECO:0000269" key="3">
    <source>
    </source>
</evidence>
<evidence type="ECO:0000303" key="4">
    <source>
    </source>
</evidence>
<evidence type="ECO:0000305" key="5">
    <source>
    </source>
</evidence>
<dbReference type="EMBL" id="HM622670">
    <property type="protein sequence ID" value="ADM34145.1"/>
    <property type="molecule type" value="Genomic_DNA"/>
</dbReference>
<dbReference type="SMR" id="E1ACQ7"/>
<dbReference type="GO" id="GO:0005634">
    <property type="term" value="C:nucleus"/>
    <property type="evidence" value="ECO:0007669"/>
    <property type="project" value="UniProtKB-SubCell"/>
</dbReference>
<dbReference type="GO" id="GO:0003677">
    <property type="term" value="F:DNA binding"/>
    <property type="evidence" value="ECO:0007669"/>
    <property type="project" value="UniProtKB-KW"/>
</dbReference>
<dbReference type="GO" id="GO:0000981">
    <property type="term" value="F:DNA-binding transcription factor activity, RNA polymerase II-specific"/>
    <property type="evidence" value="ECO:0007669"/>
    <property type="project" value="InterPro"/>
</dbReference>
<dbReference type="GO" id="GO:0008270">
    <property type="term" value="F:zinc ion binding"/>
    <property type="evidence" value="ECO:0007669"/>
    <property type="project" value="InterPro"/>
</dbReference>
<dbReference type="GO" id="GO:0045122">
    <property type="term" value="P:aflatoxin biosynthetic process"/>
    <property type="evidence" value="ECO:0007669"/>
    <property type="project" value="InterPro"/>
</dbReference>
<dbReference type="CDD" id="cd00067">
    <property type="entry name" value="GAL4"/>
    <property type="match status" value="1"/>
</dbReference>
<dbReference type="Gene3D" id="4.10.240.10">
    <property type="entry name" value="Zn(2)-C6 fungal-type DNA-binding domain"/>
    <property type="match status" value="1"/>
</dbReference>
<dbReference type="InterPro" id="IPR013700">
    <property type="entry name" value="AflR"/>
</dbReference>
<dbReference type="InterPro" id="IPR050675">
    <property type="entry name" value="OAF3"/>
</dbReference>
<dbReference type="InterPro" id="IPR036864">
    <property type="entry name" value="Zn2-C6_fun-type_DNA-bd_sf"/>
</dbReference>
<dbReference type="InterPro" id="IPR001138">
    <property type="entry name" value="Zn2Cys6_DnaBD"/>
</dbReference>
<dbReference type="PANTHER" id="PTHR31069:SF31">
    <property type="entry name" value="MONODICTYPHENONE CLUSTER TRANSCRIPTION FACTOR-RELATED"/>
    <property type="match status" value="1"/>
</dbReference>
<dbReference type="PANTHER" id="PTHR31069">
    <property type="entry name" value="OLEATE-ACTIVATED TRANSCRIPTION FACTOR 1-RELATED"/>
    <property type="match status" value="1"/>
</dbReference>
<dbReference type="Pfam" id="PF08493">
    <property type="entry name" value="AflR"/>
    <property type="match status" value="1"/>
</dbReference>
<dbReference type="Pfam" id="PF00172">
    <property type="entry name" value="Zn_clus"/>
    <property type="match status" value="1"/>
</dbReference>
<dbReference type="PRINTS" id="PR00755">
    <property type="entry name" value="AFLATOXINBRP"/>
</dbReference>
<dbReference type="SMART" id="SM00066">
    <property type="entry name" value="GAL4"/>
    <property type="match status" value="1"/>
</dbReference>
<dbReference type="SUPFAM" id="SSF57701">
    <property type="entry name" value="Zn2/Cys6 DNA-binding domain"/>
    <property type="match status" value="1"/>
</dbReference>
<dbReference type="PROSITE" id="PS00463">
    <property type="entry name" value="ZN2_CY6_FUNGAL_1"/>
    <property type="match status" value="1"/>
</dbReference>
<dbReference type="PROSITE" id="PS50048">
    <property type="entry name" value="ZN2_CY6_FUNGAL_2"/>
    <property type="match status" value="1"/>
</dbReference>
<feature type="chain" id="PRO_0000448818" description="Notoamide biosynthesis transcriptional activator notL">
    <location>
        <begin position="1"/>
        <end position="484"/>
    </location>
</feature>
<feature type="DNA-binding region" description="Zn(2)-C6 fungal-type" evidence="1">
    <location>
        <begin position="33"/>
        <end position="60"/>
    </location>
</feature>
<feature type="region of interest" description="Disordered" evidence="2">
    <location>
        <begin position="70"/>
        <end position="154"/>
    </location>
</feature>
<feature type="region of interest" description="Disordered" evidence="2">
    <location>
        <begin position="363"/>
        <end position="387"/>
    </location>
</feature>
<feature type="compositionally biased region" description="Low complexity" evidence="2">
    <location>
        <begin position="76"/>
        <end position="122"/>
    </location>
</feature>
<feature type="compositionally biased region" description="Basic and acidic residues" evidence="2">
    <location>
        <begin position="123"/>
        <end position="133"/>
    </location>
</feature>
<feature type="compositionally biased region" description="Polar residues" evidence="2">
    <location>
        <begin position="139"/>
        <end position="154"/>
    </location>
</feature>
<feature type="compositionally biased region" description="Polar residues" evidence="2">
    <location>
        <begin position="368"/>
        <end position="378"/>
    </location>
</feature>
<gene>
    <name evidence="4" type="primary">notL</name>
</gene>
<proteinExistence type="evidence at protein level"/>
<protein>
    <recommendedName>
        <fullName evidence="4">Notoamide biosynthesis transcriptional activator notL</fullName>
    </recommendedName>
    <alternativeName>
        <fullName evidence="4">Notoamide biosynthesis cluster protein L</fullName>
    </alternativeName>
</protein>
<name>NOTL_ASPSM</name>
<reference key="1">
    <citation type="journal article" date="2010" name="J. Am. Chem. Soc.">
        <title>Genome-based characterization of two prenylation steps in the assembly of the stephacidin and notoamide anticancer agents in a marine-derived Aspergillus sp.</title>
        <authorList>
            <person name="Ding Y."/>
            <person name="de Wet J.R."/>
            <person name="Cavalcoli J."/>
            <person name="Li S."/>
            <person name="Greshock T.J."/>
            <person name="Miller K.A."/>
            <person name="Finefield J.M."/>
            <person name="Sunderhaus J.D."/>
            <person name="McAfoos T.J."/>
            <person name="Tsukamoto S."/>
            <person name="Williams R.M."/>
            <person name="Sherman D.H."/>
        </authorList>
    </citation>
    <scope>NUCLEOTIDE SEQUENCE [GENOMIC DNA]</scope>
    <scope>FUNCTION</scope>
    <source>
        <strain>MF297-2</strain>
    </source>
</reference>
<reference key="2">
    <citation type="journal article" date="2007" name="Angew. Chem. Int. Ed.">
        <title>Notoamides A-D: prenylated indole alkaloids isolated from a marine-derived fungus, Aspergillus sp.</title>
        <authorList>
            <person name="Kato H."/>
            <person name="Yoshida T."/>
            <person name="Tokue T."/>
            <person name="Nojiri Y."/>
            <person name="Hirota H."/>
            <person name="Ohta T."/>
            <person name="Williams R.M."/>
            <person name="Tsukamoto S."/>
        </authorList>
    </citation>
    <scope>BIOTECHNOLOGY</scope>
</reference>
<sequence>MATLDTASDTASPPRAPVVRRSALGCTKVRDSCQSCATSKIKCPKEKTSCSKCQARGIECQYFFARRPGRRRENSTGHPTSCTSTSTTANSSSSSSRSSNSSSSSSTSPPSSSSSLSSNPEPTSDKDLPRPRSGDGAAANSTEPSILPPANNSVLDITPTDNVLGPYSSDLFSVLEDPSVFAPLPDFDSNMTDVDFSTMDYFEQPVMDGDNFTRALSDIGSLLIPETISFDLGALESDPLSASAVPSLASSVPTPSTAHSVTMMRGLSASISCRCVSQALDLLKALSAKSAPVSPFSGPGAASMTTMSSVQALMGENQQYIDNVSNLLSCSSCTEDTFLLAIVSMIVLKILERYASAARAQVGGGESDTGQRPATSMIPNGKDQMRPLGRIYSTGGRDSARSVLSELHRVQKLVNLLSPKLKKRQEADTRAFAHVAWGRHTVSNENDKALSTLLSPDTLAQMEGDMRKSLSSLSANIINRLRQD</sequence>